<reference key="1">
    <citation type="journal article" date="2001" name="EMBO J.">
        <title>Modulation of integrin signal transduction by ILKAP, a protein phosphatase 2C associating with the integrin-linked kinase, ILK1.</title>
        <authorList>
            <person name="Leung-Hagesteijn C."/>
            <person name="Mahendra A."/>
            <person name="Naruszewicz I."/>
            <person name="Hannigan G.E."/>
        </authorList>
    </citation>
    <scope>NUCLEOTIDE SEQUENCE [MRNA]</scope>
    <scope>COFACTOR</scope>
    <scope>INTERACTION WITH ILK</scope>
    <scope>SUBCELLULAR LOCATION</scope>
    <scope>TISSUE SPECIFICITY</scope>
    <scope>INDUCTION</scope>
    <scope>MUTAGENESIS OF ASP-152 AND HIS-154</scope>
    <scope>POSSIBLE FUNCTION</scope>
</reference>
<reference key="2">
    <citation type="journal article" date="2001" name="Genome Res.">
        <title>Towards a catalog of human genes and proteins: sequencing and analysis of 500 novel complete protein coding human cDNAs.</title>
        <authorList>
            <person name="Wiemann S."/>
            <person name="Weil B."/>
            <person name="Wellenreuther R."/>
            <person name="Gassenhuber J."/>
            <person name="Glassl S."/>
            <person name="Ansorge W."/>
            <person name="Boecher M."/>
            <person name="Bloecker H."/>
            <person name="Bauersachs S."/>
            <person name="Blum H."/>
            <person name="Lauber J."/>
            <person name="Duesterhoeft A."/>
            <person name="Beyer A."/>
            <person name="Koehrer K."/>
            <person name="Strack N."/>
            <person name="Mewes H.-W."/>
            <person name="Ottenwaelder B."/>
            <person name="Obermaier B."/>
            <person name="Tampe J."/>
            <person name="Heubner D."/>
            <person name="Wambutt R."/>
            <person name="Korn B."/>
            <person name="Klein M."/>
            <person name="Poustka A."/>
        </authorList>
    </citation>
    <scope>NUCLEOTIDE SEQUENCE [LARGE SCALE MRNA]</scope>
    <source>
        <tissue>Testis</tissue>
    </source>
</reference>
<reference key="3">
    <citation type="submission" date="2004-06" db="EMBL/GenBank/DDBJ databases">
        <title>Cloning of human full open reading frames in Gateway(TM) system entry vector (pDONR201).</title>
        <authorList>
            <person name="Ebert L."/>
            <person name="Schick M."/>
            <person name="Neubert P."/>
            <person name="Schatten R."/>
            <person name="Henze S."/>
            <person name="Korn B."/>
        </authorList>
    </citation>
    <scope>NUCLEOTIDE SEQUENCE [LARGE SCALE MRNA]</scope>
</reference>
<reference key="4">
    <citation type="journal article" date="2004" name="Nat. Genet.">
        <title>Complete sequencing and characterization of 21,243 full-length human cDNAs.</title>
        <authorList>
            <person name="Ota T."/>
            <person name="Suzuki Y."/>
            <person name="Nishikawa T."/>
            <person name="Otsuki T."/>
            <person name="Sugiyama T."/>
            <person name="Irie R."/>
            <person name="Wakamatsu A."/>
            <person name="Hayashi K."/>
            <person name="Sato H."/>
            <person name="Nagai K."/>
            <person name="Kimura K."/>
            <person name="Makita H."/>
            <person name="Sekine M."/>
            <person name="Obayashi M."/>
            <person name="Nishi T."/>
            <person name="Shibahara T."/>
            <person name="Tanaka T."/>
            <person name="Ishii S."/>
            <person name="Yamamoto J."/>
            <person name="Saito K."/>
            <person name="Kawai Y."/>
            <person name="Isono Y."/>
            <person name="Nakamura Y."/>
            <person name="Nagahari K."/>
            <person name="Murakami K."/>
            <person name="Yasuda T."/>
            <person name="Iwayanagi T."/>
            <person name="Wagatsuma M."/>
            <person name="Shiratori A."/>
            <person name="Sudo H."/>
            <person name="Hosoiri T."/>
            <person name="Kaku Y."/>
            <person name="Kodaira H."/>
            <person name="Kondo H."/>
            <person name="Sugawara M."/>
            <person name="Takahashi M."/>
            <person name="Kanda K."/>
            <person name="Yokoi T."/>
            <person name="Furuya T."/>
            <person name="Kikkawa E."/>
            <person name="Omura Y."/>
            <person name="Abe K."/>
            <person name="Kamihara K."/>
            <person name="Katsuta N."/>
            <person name="Sato K."/>
            <person name="Tanikawa M."/>
            <person name="Yamazaki M."/>
            <person name="Ninomiya K."/>
            <person name="Ishibashi T."/>
            <person name="Yamashita H."/>
            <person name="Murakawa K."/>
            <person name="Fujimori K."/>
            <person name="Tanai H."/>
            <person name="Kimata M."/>
            <person name="Watanabe M."/>
            <person name="Hiraoka S."/>
            <person name="Chiba Y."/>
            <person name="Ishida S."/>
            <person name="Ono Y."/>
            <person name="Takiguchi S."/>
            <person name="Watanabe S."/>
            <person name="Yosida M."/>
            <person name="Hotuta T."/>
            <person name="Kusano J."/>
            <person name="Kanehori K."/>
            <person name="Takahashi-Fujii A."/>
            <person name="Hara H."/>
            <person name="Tanase T.-O."/>
            <person name="Nomura Y."/>
            <person name="Togiya S."/>
            <person name="Komai F."/>
            <person name="Hara R."/>
            <person name="Takeuchi K."/>
            <person name="Arita M."/>
            <person name="Imose N."/>
            <person name="Musashino K."/>
            <person name="Yuuki H."/>
            <person name="Oshima A."/>
            <person name="Sasaki N."/>
            <person name="Aotsuka S."/>
            <person name="Yoshikawa Y."/>
            <person name="Matsunawa H."/>
            <person name="Ichihara T."/>
            <person name="Shiohata N."/>
            <person name="Sano S."/>
            <person name="Moriya S."/>
            <person name="Momiyama H."/>
            <person name="Satoh N."/>
            <person name="Takami S."/>
            <person name="Terashima Y."/>
            <person name="Suzuki O."/>
            <person name="Nakagawa S."/>
            <person name="Senoh A."/>
            <person name="Mizoguchi H."/>
            <person name="Goto Y."/>
            <person name="Shimizu F."/>
            <person name="Wakebe H."/>
            <person name="Hishigaki H."/>
            <person name="Watanabe T."/>
            <person name="Sugiyama A."/>
            <person name="Takemoto M."/>
            <person name="Kawakami B."/>
            <person name="Yamazaki M."/>
            <person name="Watanabe K."/>
            <person name="Kumagai A."/>
            <person name="Itakura S."/>
            <person name="Fukuzumi Y."/>
            <person name="Fujimori Y."/>
            <person name="Komiyama M."/>
            <person name="Tashiro H."/>
            <person name="Tanigami A."/>
            <person name="Fujiwara T."/>
            <person name="Ono T."/>
            <person name="Yamada K."/>
            <person name="Fujii Y."/>
            <person name="Ozaki K."/>
            <person name="Hirao M."/>
            <person name="Ohmori Y."/>
            <person name="Kawabata A."/>
            <person name="Hikiji T."/>
            <person name="Kobatake N."/>
            <person name="Inagaki H."/>
            <person name="Ikema Y."/>
            <person name="Okamoto S."/>
            <person name="Okitani R."/>
            <person name="Kawakami T."/>
            <person name="Noguchi S."/>
            <person name="Itoh T."/>
            <person name="Shigeta K."/>
            <person name="Senba T."/>
            <person name="Matsumura K."/>
            <person name="Nakajima Y."/>
            <person name="Mizuno T."/>
            <person name="Morinaga M."/>
            <person name="Sasaki M."/>
            <person name="Togashi T."/>
            <person name="Oyama M."/>
            <person name="Hata H."/>
            <person name="Watanabe M."/>
            <person name="Komatsu T."/>
            <person name="Mizushima-Sugano J."/>
            <person name="Satoh T."/>
            <person name="Shirai Y."/>
            <person name="Takahashi Y."/>
            <person name="Nakagawa K."/>
            <person name="Okumura K."/>
            <person name="Nagase T."/>
            <person name="Nomura N."/>
            <person name="Kikuchi H."/>
            <person name="Masuho Y."/>
            <person name="Yamashita R."/>
            <person name="Nakai K."/>
            <person name="Yada T."/>
            <person name="Nakamura Y."/>
            <person name="Ohara O."/>
            <person name="Isogai T."/>
            <person name="Sugano S."/>
        </authorList>
    </citation>
    <scope>NUCLEOTIDE SEQUENCE [LARGE SCALE MRNA]</scope>
    <scope>VARIANT MET-66</scope>
    <source>
        <tissue>Embryo</tissue>
    </source>
</reference>
<reference key="5">
    <citation type="journal article" date="2005" name="Nature">
        <title>Generation and annotation of the DNA sequences of human chromosomes 2 and 4.</title>
        <authorList>
            <person name="Hillier L.W."/>
            <person name="Graves T.A."/>
            <person name="Fulton R.S."/>
            <person name="Fulton L.A."/>
            <person name="Pepin K.H."/>
            <person name="Minx P."/>
            <person name="Wagner-McPherson C."/>
            <person name="Layman D."/>
            <person name="Wylie K."/>
            <person name="Sekhon M."/>
            <person name="Becker M.C."/>
            <person name="Fewell G.A."/>
            <person name="Delehaunty K.D."/>
            <person name="Miner T.L."/>
            <person name="Nash W.E."/>
            <person name="Kremitzki C."/>
            <person name="Oddy L."/>
            <person name="Du H."/>
            <person name="Sun H."/>
            <person name="Bradshaw-Cordum H."/>
            <person name="Ali J."/>
            <person name="Carter J."/>
            <person name="Cordes M."/>
            <person name="Harris A."/>
            <person name="Isak A."/>
            <person name="van Brunt A."/>
            <person name="Nguyen C."/>
            <person name="Du F."/>
            <person name="Courtney L."/>
            <person name="Kalicki J."/>
            <person name="Ozersky P."/>
            <person name="Abbott S."/>
            <person name="Armstrong J."/>
            <person name="Belter E.A."/>
            <person name="Caruso L."/>
            <person name="Cedroni M."/>
            <person name="Cotton M."/>
            <person name="Davidson T."/>
            <person name="Desai A."/>
            <person name="Elliott G."/>
            <person name="Erb T."/>
            <person name="Fronick C."/>
            <person name="Gaige T."/>
            <person name="Haakenson W."/>
            <person name="Haglund K."/>
            <person name="Holmes A."/>
            <person name="Harkins R."/>
            <person name="Kim K."/>
            <person name="Kruchowski S.S."/>
            <person name="Strong C.M."/>
            <person name="Grewal N."/>
            <person name="Goyea E."/>
            <person name="Hou S."/>
            <person name="Levy A."/>
            <person name="Martinka S."/>
            <person name="Mead K."/>
            <person name="McLellan M.D."/>
            <person name="Meyer R."/>
            <person name="Randall-Maher J."/>
            <person name="Tomlinson C."/>
            <person name="Dauphin-Kohlberg S."/>
            <person name="Kozlowicz-Reilly A."/>
            <person name="Shah N."/>
            <person name="Swearengen-Shahid S."/>
            <person name="Snider J."/>
            <person name="Strong J.T."/>
            <person name="Thompson J."/>
            <person name="Yoakum M."/>
            <person name="Leonard S."/>
            <person name="Pearman C."/>
            <person name="Trani L."/>
            <person name="Radionenko M."/>
            <person name="Waligorski J.E."/>
            <person name="Wang C."/>
            <person name="Rock S.M."/>
            <person name="Tin-Wollam A.-M."/>
            <person name="Maupin R."/>
            <person name="Latreille P."/>
            <person name="Wendl M.C."/>
            <person name="Yang S.-P."/>
            <person name="Pohl C."/>
            <person name="Wallis J.W."/>
            <person name="Spieth J."/>
            <person name="Bieri T.A."/>
            <person name="Berkowicz N."/>
            <person name="Nelson J.O."/>
            <person name="Osborne J."/>
            <person name="Ding L."/>
            <person name="Meyer R."/>
            <person name="Sabo A."/>
            <person name="Shotland Y."/>
            <person name="Sinha P."/>
            <person name="Wohldmann P.E."/>
            <person name="Cook L.L."/>
            <person name="Hickenbotham M.T."/>
            <person name="Eldred J."/>
            <person name="Williams D."/>
            <person name="Jones T.A."/>
            <person name="She X."/>
            <person name="Ciccarelli F.D."/>
            <person name="Izaurralde E."/>
            <person name="Taylor J."/>
            <person name="Schmutz J."/>
            <person name="Myers R.M."/>
            <person name="Cox D.R."/>
            <person name="Huang X."/>
            <person name="McPherson J.D."/>
            <person name="Mardis E.R."/>
            <person name="Clifton S.W."/>
            <person name="Warren W.C."/>
            <person name="Chinwalla A.T."/>
            <person name="Eddy S.R."/>
            <person name="Marra M.A."/>
            <person name="Ovcharenko I."/>
            <person name="Furey T.S."/>
            <person name="Miller W."/>
            <person name="Eichler E.E."/>
            <person name="Bork P."/>
            <person name="Suyama M."/>
            <person name="Torrents D."/>
            <person name="Waterston R.H."/>
            <person name="Wilson R.K."/>
        </authorList>
    </citation>
    <scope>NUCLEOTIDE SEQUENCE [LARGE SCALE GENOMIC DNA]</scope>
</reference>
<reference key="6">
    <citation type="journal article" date="2004" name="Genome Res.">
        <title>The status, quality, and expansion of the NIH full-length cDNA project: the Mammalian Gene Collection (MGC).</title>
        <authorList>
            <consortium name="The MGC Project Team"/>
        </authorList>
    </citation>
    <scope>NUCLEOTIDE SEQUENCE [LARGE SCALE MRNA]</scope>
    <source>
        <tissue>Uterus</tissue>
    </source>
</reference>
<reference key="7">
    <citation type="journal article" date="2004" name="Oncogene">
        <title>ILKAP regulates ILK signaling and inhibits anchorage-independent growth.</title>
        <authorList>
            <person name="Kumar A.S."/>
            <person name="Naruszewicz I."/>
            <person name="Wang P."/>
            <person name="Leung-Hagesteijn C."/>
            <person name="Hannigan G.E."/>
        </authorList>
    </citation>
    <scope>INTERACTION WITH ILK</scope>
    <scope>ROLE IN ONCOGENIC TRANSFORMATION</scope>
    <scope>POSSIBLE FUNCTION</scope>
</reference>
<reference key="8">
    <citation type="journal article" date="2006" name="Cell">
        <title>Global, in vivo, and site-specific phosphorylation dynamics in signaling networks.</title>
        <authorList>
            <person name="Olsen J.V."/>
            <person name="Blagoev B."/>
            <person name="Gnad F."/>
            <person name="Macek B."/>
            <person name="Kumar C."/>
            <person name="Mortensen P."/>
            <person name="Mann M."/>
        </authorList>
    </citation>
    <scope>PHOSPHORYLATION [LARGE SCALE ANALYSIS] AT SER-13</scope>
    <scope>IDENTIFICATION BY MASS SPECTROMETRY [LARGE SCALE ANALYSIS]</scope>
    <source>
        <tissue>Cervix carcinoma</tissue>
    </source>
</reference>
<reference key="9">
    <citation type="journal article" date="2009" name="Science">
        <title>Lysine acetylation targets protein complexes and co-regulates major cellular functions.</title>
        <authorList>
            <person name="Choudhary C."/>
            <person name="Kumar C."/>
            <person name="Gnad F."/>
            <person name="Nielsen M.L."/>
            <person name="Rehman M."/>
            <person name="Walther T.C."/>
            <person name="Olsen J.V."/>
            <person name="Mann M."/>
        </authorList>
    </citation>
    <scope>ACETYLATION [LARGE SCALE ANALYSIS] AT LYS-210</scope>
    <scope>IDENTIFICATION BY MASS SPECTROMETRY [LARGE SCALE ANALYSIS]</scope>
</reference>
<reference key="10">
    <citation type="journal article" date="2010" name="Sci. Signal.">
        <title>Quantitative phosphoproteomics reveals widespread full phosphorylation site occupancy during mitosis.</title>
        <authorList>
            <person name="Olsen J.V."/>
            <person name="Vermeulen M."/>
            <person name="Santamaria A."/>
            <person name="Kumar C."/>
            <person name="Miller M.L."/>
            <person name="Jensen L.J."/>
            <person name="Gnad F."/>
            <person name="Cox J."/>
            <person name="Jensen T.S."/>
            <person name="Nigg E.A."/>
            <person name="Brunak S."/>
            <person name="Mann M."/>
        </authorList>
    </citation>
    <scope>ACETYLATION [LARGE SCALE ANALYSIS] AT MET-1</scope>
    <scope>PHOSPHORYLATION [LARGE SCALE ANALYSIS] AT SER-13</scope>
    <scope>IDENTIFICATION BY MASS SPECTROMETRY [LARGE SCALE ANALYSIS]</scope>
    <source>
        <tissue>Cervix carcinoma</tissue>
    </source>
</reference>
<reference key="11">
    <citation type="journal article" date="2011" name="BMC Syst. Biol.">
        <title>Initial characterization of the human central proteome.</title>
        <authorList>
            <person name="Burkard T.R."/>
            <person name="Planyavsky M."/>
            <person name="Kaupe I."/>
            <person name="Breitwieser F.P."/>
            <person name="Buerckstuemmer T."/>
            <person name="Bennett K.L."/>
            <person name="Superti-Furga G."/>
            <person name="Colinge J."/>
        </authorList>
    </citation>
    <scope>IDENTIFICATION BY MASS SPECTROMETRY [LARGE SCALE ANALYSIS]</scope>
</reference>
<reference key="12">
    <citation type="journal article" date="2011" name="Sci. Signal.">
        <title>System-wide temporal characterization of the proteome and phosphoproteome of human embryonic stem cell differentiation.</title>
        <authorList>
            <person name="Rigbolt K.T."/>
            <person name="Prokhorova T.A."/>
            <person name="Akimov V."/>
            <person name="Henningsen J."/>
            <person name="Johansen P.T."/>
            <person name="Kratchmarova I."/>
            <person name="Kassem M."/>
            <person name="Mann M."/>
            <person name="Olsen J.V."/>
            <person name="Blagoev B."/>
        </authorList>
    </citation>
    <scope>ACETYLATION [LARGE SCALE ANALYSIS] AT MET-1</scope>
    <scope>PHOSPHORYLATION [LARGE SCALE ANALYSIS] AT SER-13</scope>
    <scope>IDENTIFICATION BY MASS SPECTROMETRY [LARGE SCALE ANALYSIS]</scope>
</reference>
<reference key="13">
    <citation type="journal article" date="2012" name="Mol. Cell. Proteomics">
        <title>Comparative large-scale characterisation of plant vs. mammal proteins reveals similar and idiosyncratic N-alpha acetylation features.</title>
        <authorList>
            <person name="Bienvenut W.V."/>
            <person name="Sumpton D."/>
            <person name="Martinez A."/>
            <person name="Lilla S."/>
            <person name="Espagne C."/>
            <person name="Meinnel T."/>
            <person name="Giglione C."/>
        </authorList>
    </citation>
    <scope>ACETYLATION [LARGE SCALE ANALYSIS] AT MET-1</scope>
    <scope>IDENTIFICATION BY MASS SPECTROMETRY [LARGE SCALE ANALYSIS]</scope>
</reference>
<reference key="14">
    <citation type="journal article" date="2012" name="Proc. Natl. Acad. Sci. U.S.A.">
        <title>N-terminal acetylome analyses and functional insights of the N-terminal acetyltransferase NatB.</title>
        <authorList>
            <person name="Van Damme P."/>
            <person name="Lasa M."/>
            <person name="Polevoda B."/>
            <person name="Gazquez C."/>
            <person name="Elosegui-Artola A."/>
            <person name="Kim D.S."/>
            <person name="De Juan-Pardo E."/>
            <person name="Demeyer K."/>
            <person name="Hole K."/>
            <person name="Larrea E."/>
            <person name="Timmerman E."/>
            <person name="Prieto J."/>
            <person name="Arnesen T."/>
            <person name="Sherman F."/>
            <person name="Gevaert K."/>
            <person name="Aldabe R."/>
        </authorList>
    </citation>
    <scope>ACETYLATION [LARGE SCALE ANALYSIS] AT MET-1</scope>
    <scope>IDENTIFICATION BY MASS SPECTROMETRY [LARGE SCALE ANALYSIS]</scope>
</reference>
<reference key="15">
    <citation type="journal article" date="2013" name="J. Proteome Res.">
        <title>Toward a comprehensive characterization of a human cancer cell phosphoproteome.</title>
        <authorList>
            <person name="Zhou H."/>
            <person name="Di Palma S."/>
            <person name="Preisinger C."/>
            <person name="Peng M."/>
            <person name="Polat A.N."/>
            <person name="Heck A.J."/>
            <person name="Mohammed S."/>
        </authorList>
    </citation>
    <scope>PHOSPHORYLATION [LARGE SCALE ANALYSIS] AT SER-13</scope>
    <scope>IDENTIFICATION BY MASS SPECTROMETRY [LARGE SCALE ANALYSIS]</scope>
    <source>
        <tissue>Cervix carcinoma</tissue>
        <tissue>Erythroleukemia</tissue>
    </source>
</reference>
<sequence>MDLFGDLPEPERSPRPAAGKEAQKGPLLFDDLPPASSTDSGSGGPLLFDDLPPASSGDSGSLATSISQMVKTEGKGAKRKTSEEEKNGSEELVEKKVCKASSVIFGLKGYVAERKGEREEMQDAHVILNDITEECRPPSSLITRVSYFAVFDGHGGIRASKFAAQNLHQNLIRKFPKGDVISVEKTVKRCLLDTFKHTDEEFLKQASSQKPAWKDGSTATCVLAVDNILYIANLGDSRAILCRYNEESQKHAALSLSKEHNPTQYEERMRIQKAGGNVRDGRVLGVLEVSRSIGDGQYKRCGVTSVPDIRRCQLTPNDRFILLACDGLFKVFTPEEAVNFILSCLEDEKIQTREGKSAADARYEAACNRLANKAVQRGSADNVTVMVVRIGH</sequence>
<organism>
    <name type="scientific">Homo sapiens</name>
    <name type="common">Human</name>
    <dbReference type="NCBI Taxonomy" id="9606"/>
    <lineage>
        <taxon>Eukaryota</taxon>
        <taxon>Metazoa</taxon>
        <taxon>Chordata</taxon>
        <taxon>Craniata</taxon>
        <taxon>Vertebrata</taxon>
        <taxon>Euteleostomi</taxon>
        <taxon>Mammalia</taxon>
        <taxon>Eutheria</taxon>
        <taxon>Euarchontoglires</taxon>
        <taxon>Primates</taxon>
        <taxon>Haplorrhini</taxon>
        <taxon>Catarrhini</taxon>
        <taxon>Hominidae</taxon>
        <taxon>Homo</taxon>
    </lineage>
</organism>
<proteinExistence type="evidence at protein level"/>
<feature type="chain" id="PRO_0000272271" description="Integrin-linked kinase-associated serine/threonine phosphatase 2C">
    <location>
        <begin position="1"/>
        <end position="392"/>
    </location>
</feature>
<feature type="domain" description="PPM-type phosphatase" evidence="2">
    <location>
        <begin position="108"/>
        <end position="390"/>
    </location>
</feature>
<feature type="region of interest" description="Disordered" evidence="3">
    <location>
        <begin position="1"/>
        <end position="90"/>
    </location>
</feature>
<feature type="compositionally biased region" description="Polar residues" evidence="3">
    <location>
        <begin position="56"/>
        <end position="70"/>
    </location>
</feature>
<feature type="compositionally biased region" description="Basic and acidic residues" evidence="3">
    <location>
        <begin position="72"/>
        <end position="90"/>
    </location>
</feature>
<feature type="binding site" evidence="1">
    <location>
        <position position="152"/>
    </location>
    <ligand>
        <name>Mn(2+)</name>
        <dbReference type="ChEBI" id="CHEBI:29035"/>
        <label>1</label>
    </ligand>
</feature>
<feature type="binding site" evidence="1">
    <location>
        <position position="152"/>
    </location>
    <ligand>
        <name>Mn(2+)</name>
        <dbReference type="ChEBI" id="CHEBI:29035"/>
        <label>2</label>
    </ligand>
</feature>
<feature type="binding site" evidence="1">
    <location>
        <position position="153"/>
    </location>
    <ligand>
        <name>Mn(2+)</name>
        <dbReference type="ChEBI" id="CHEBI:29035"/>
        <label>1</label>
    </ligand>
</feature>
<feature type="binding site" evidence="1">
    <location>
        <position position="326"/>
    </location>
    <ligand>
        <name>Mn(2+)</name>
        <dbReference type="ChEBI" id="CHEBI:29035"/>
        <label>2</label>
    </ligand>
</feature>
<feature type="binding site" evidence="1">
    <location>
        <position position="381"/>
    </location>
    <ligand>
        <name>Mn(2+)</name>
        <dbReference type="ChEBI" id="CHEBI:29035"/>
        <label>2</label>
    </ligand>
</feature>
<feature type="modified residue" description="N-acetylmethionine" evidence="10 11 12 13">
    <location>
        <position position="1"/>
    </location>
</feature>
<feature type="modified residue" description="Phosphoserine" evidence="8 10 11 14">
    <location>
        <position position="13"/>
    </location>
</feature>
<feature type="modified residue" description="N6-acetyllysine" evidence="9">
    <location>
        <position position="210"/>
    </location>
</feature>
<feature type="sequence variant" id="VAR_061542" description="In dbSNP:rs34371548." evidence="5">
    <original>I</original>
    <variation>M</variation>
    <location>
        <position position="66"/>
    </location>
</feature>
<feature type="mutagenesis site" description="Loss of &gt;90% of activity." evidence="4">
    <original>D</original>
    <variation>A</variation>
    <location>
        <position position="152"/>
    </location>
</feature>
<feature type="mutagenesis site" description="Loss of &gt;90% of activity." evidence="4">
    <original>H</original>
    <variation>D</variation>
    <location>
        <position position="154"/>
    </location>
</feature>
<feature type="mutagenesis site" description="Loss of &gt;90% of activity." evidence="4">
    <original>H</original>
    <variation>L</variation>
    <location>
        <position position="154"/>
    </location>
</feature>
<gene>
    <name type="primary">ILKAP</name>
</gene>
<evidence type="ECO:0000250" key="1"/>
<evidence type="ECO:0000255" key="2">
    <source>
        <dbReference type="PROSITE-ProRule" id="PRU01082"/>
    </source>
</evidence>
<evidence type="ECO:0000256" key="3">
    <source>
        <dbReference type="SAM" id="MobiDB-lite"/>
    </source>
</evidence>
<evidence type="ECO:0000269" key="4">
    <source>
    </source>
</evidence>
<evidence type="ECO:0000269" key="5">
    <source>
    </source>
</evidence>
<evidence type="ECO:0000269" key="6">
    <source>
    </source>
</evidence>
<evidence type="ECO:0000305" key="7"/>
<evidence type="ECO:0007744" key="8">
    <source>
    </source>
</evidence>
<evidence type="ECO:0007744" key="9">
    <source>
    </source>
</evidence>
<evidence type="ECO:0007744" key="10">
    <source>
    </source>
</evidence>
<evidence type="ECO:0007744" key="11">
    <source>
    </source>
</evidence>
<evidence type="ECO:0007744" key="12">
    <source>
    </source>
</evidence>
<evidence type="ECO:0007744" key="13">
    <source>
    </source>
</evidence>
<evidence type="ECO:0007744" key="14">
    <source>
    </source>
</evidence>
<comment type="function">
    <text evidence="6">Protein phosphatase that may play a role in regulation of cell cycle progression via dephosphorylation of its substrates whose appropriate phosphorylation states might be crucial for cell proliferation. Selectively associates with integrin linked kinase (ILK), to modulate cell adhesion and growth factor signaling. Inhibits the ILK-GSK3B signaling axis and may play an important role in inhibiting oncogenic transformation.</text>
</comment>
<comment type="catalytic activity">
    <reaction>
        <text>O-phospho-L-seryl-[protein] + H2O = L-seryl-[protein] + phosphate</text>
        <dbReference type="Rhea" id="RHEA:20629"/>
        <dbReference type="Rhea" id="RHEA-COMP:9863"/>
        <dbReference type="Rhea" id="RHEA-COMP:11604"/>
        <dbReference type="ChEBI" id="CHEBI:15377"/>
        <dbReference type="ChEBI" id="CHEBI:29999"/>
        <dbReference type="ChEBI" id="CHEBI:43474"/>
        <dbReference type="ChEBI" id="CHEBI:83421"/>
        <dbReference type="EC" id="3.1.3.16"/>
    </reaction>
</comment>
<comment type="catalytic activity">
    <reaction>
        <text>O-phospho-L-threonyl-[protein] + H2O = L-threonyl-[protein] + phosphate</text>
        <dbReference type="Rhea" id="RHEA:47004"/>
        <dbReference type="Rhea" id="RHEA-COMP:11060"/>
        <dbReference type="Rhea" id="RHEA-COMP:11605"/>
        <dbReference type="ChEBI" id="CHEBI:15377"/>
        <dbReference type="ChEBI" id="CHEBI:30013"/>
        <dbReference type="ChEBI" id="CHEBI:43474"/>
        <dbReference type="ChEBI" id="CHEBI:61977"/>
        <dbReference type="EC" id="3.1.3.16"/>
    </reaction>
</comment>
<comment type="cofactor">
    <cofactor evidence="1">
        <name>Mg(2+)</name>
        <dbReference type="ChEBI" id="CHEBI:18420"/>
    </cofactor>
    <cofactor evidence="1">
        <name>Mn(2+)</name>
        <dbReference type="ChEBI" id="CHEBI:29035"/>
    </cofactor>
    <text evidence="1">Binds 2 magnesium or manganese ions per subunit.</text>
</comment>
<comment type="activity regulation">
    <text>Inhibited rather than stimulated by magnesium.</text>
</comment>
<comment type="subunit">
    <text evidence="4 6">Interacts with ILK. Specific association with ILK is independent of the catalytic activity of either partner.</text>
</comment>
<comment type="interaction">
    <interactant intactId="EBI-2620298">
        <id>Q9H0C8</id>
    </interactant>
    <interactant intactId="EBI-747644">
        <id>Q13418</id>
        <label>ILK</label>
    </interactant>
    <organismsDiffer>false</organismsDiffer>
    <experiments>3</experiments>
</comment>
<comment type="interaction">
    <interactant intactId="EBI-2620298">
        <id>Q9H0C8</id>
    </interactant>
    <interactant intactId="EBI-5235340">
        <id>Q7Z699</id>
        <label>SPRED1</label>
    </interactant>
    <organismsDiffer>false</organismsDiffer>
    <experiments>3</experiments>
</comment>
<comment type="subcellular location">
    <subcellularLocation>
        <location evidence="4">Cytoplasm</location>
    </subcellularLocation>
</comment>
<comment type="tissue specificity">
    <text evidence="4">Widely expressed. Highest levels expressed in striated muscle. Much lower levels evident in various smooth muscle tissues.</text>
</comment>
<comment type="similarity">
    <text evidence="7">Belongs to the PP2C family.</text>
</comment>
<dbReference type="EC" id="3.1.3.16"/>
<dbReference type="EMBL" id="AY024365">
    <property type="protein sequence ID" value="AAK07736.1"/>
    <property type="molecule type" value="mRNA"/>
</dbReference>
<dbReference type="EMBL" id="AL136850">
    <property type="protein sequence ID" value="CAB66784.1"/>
    <property type="molecule type" value="mRNA"/>
</dbReference>
<dbReference type="EMBL" id="CR533533">
    <property type="protein sequence ID" value="CAG38564.1"/>
    <property type="molecule type" value="mRNA"/>
</dbReference>
<dbReference type="EMBL" id="AK001043">
    <property type="protein sequence ID" value="BAG50851.1"/>
    <property type="molecule type" value="mRNA"/>
</dbReference>
<dbReference type="EMBL" id="AC016757">
    <property type="protein sequence ID" value="AAY24336.1"/>
    <property type="molecule type" value="Genomic_DNA"/>
</dbReference>
<dbReference type="EMBL" id="BC006576">
    <property type="protein sequence ID" value="AAH06576.1"/>
    <property type="molecule type" value="mRNA"/>
</dbReference>
<dbReference type="CCDS" id="CCDS2526.1"/>
<dbReference type="RefSeq" id="NP_110395.1">
    <property type="nucleotide sequence ID" value="NM_030768.3"/>
</dbReference>
<dbReference type="SMR" id="Q9H0C8"/>
<dbReference type="BioGRID" id="123343">
    <property type="interactions" value="130"/>
</dbReference>
<dbReference type="FunCoup" id="Q9H0C8">
    <property type="interactions" value="2840"/>
</dbReference>
<dbReference type="IntAct" id="Q9H0C8">
    <property type="interactions" value="64"/>
</dbReference>
<dbReference type="MINT" id="Q9H0C8"/>
<dbReference type="STRING" id="9606.ENSP00000254654"/>
<dbReference type="DEPOD" id="ILKAP"/>
<dbReference type="GlyGen" id="Q9H0C8">
    <property type="glycosylation" value="1 site, 1 O-linked glycan (1 site)"/>
</dbReference>
<dbReference type="iPTMnet" id="Q9H0C8"/>
<dbReference type="MetOSite" id="Q9H0C8"/>
<dbReference type="PhosphoSitePlus" id="Q9H0C8"/>
<dbReference type="SwissPalm" id="Q9H0C8"/>
<dbReference type="BioMuta" id="ILKAP"/>
<dbReference type="DMDM" id="74752560"/>
<dbReference type="jPOST" id="Q9H0C8"/>
<dbReference type="MassIVE" id="Q9H0C8"/>
<dbReference type="PaxDb" id="9606-ENSP00000254654"/>
<dbReference type="PeptideAtlas" id="Q9H0C8"/>
<dbReference type="ProteomicsDB" id="80254"/>
<dbReference type="Pumba" id="Q9H0C8"/>
<dbReference type="Antibodypedia" id="1494">
    <property type="antibodies" value="300 antibodies from 32 providers"/>
</dbReference>
<dbReference type="DNASU" id="80895"/>
<dbReference type="Ensembl" id="ENST00000254654.8">
    <property type="protein sequence ID" value="ENSP00000254654.3"/>
    <property type="gene ID" value="ENSG00000132323.9"/>
</dbReference>
<dbReference type="GeneID" id="80895"/>
<dbReference type="KEGG" id="hsa:80895"/>
<dbReference type="MANE-Select" id="ENST00000254654.8">
    <property type="protein sequence ID" value="ENSP00000254654.3"/>
    <property type="RefSeq nucleotide sequence ID" value="NM_030768.3"/>
    <property type="RefSeq protein sequence ID" value="NP_110395.1"/>
</dbReference>
<dbReference type="UCSC" id="uc002vxv.4">
    <property type="organism name" value="human"/>
</dbReference>
<dbReference type="AGR" id="HGNC:15566"/>
<dbReference type="CTD" id="80895"/>
<dbReference type="DisGeNET" id="80895"/>
<dbReference type="GeneCards" id="ILKAP"/>
<dbReference type="HGNC" id="HGNC:15566">
    <property type="gene designation" value="ILKAP"/>
</dbReference>
<dbReference type="HPA" id="ENSG00000132323">
    <property type="expression patterns" value="Low tissue specificity"/>
</dbReference>
<dbReference type="MIM" id="618909">
    <property type="type" value="gene"/>
</dbReference>
<dbReference type="neXtProt" id="NX_Q9H0C8"/>
<dbReference type="OpenTargets" id="ENSG00000132323"/>
<dbReference type="PharmGKB" id="PA29856"/>
<dbReference type="VEuPathDB" id="HostDB:ENSG00000132323"/>
<dbReference type="eggNOG" id="KOG0698">
    <property type="taxonomic scope" value="Eukaryota"/>
</dbReference>
<dbReference type="GeneTree" id="ENSGT00940000157403"/>
<dbReference type="InParanoid" id="Q9H0C8"/>
<dbReference type="OMA" id="NFSCFCL"/>
<dbReference type="OrthoDB" id="10264738at2759"/>
<dbReference type="PAN-GO" id="Q9H0C8">
    <property type="GO annotations" value="3 GO annotations based on evolutionary models"/>
</dbReference>
<dbReference type="PhylomeDB" id="Q9H0C8"/>
<dbReference type="TreeFam" id="TF313513"/>
<dbReference type="PathwayCommons" id="Q9H0C8"/>
<dbReference type="SignaLink" id="Q9H0C8"/>
<dbReference type="BioGRID-ORCS" id="80895">
    <property type="hits" value="10 hits in 1170 CRISPR screens"/>
</dbReference>
<dbReference type="ChiTaRS" id="ILKAP">
    <property type="organism name" value="human"/>
</dbReference>
<dbReference type="GeneWiki" id="ILKAP"/>
<dbReference type="GenomeRNAi" id="80895"/>
<dbReference type="Pharos" id="Q9H0C8">
    <property type="development level" value="Tbio"/>
</dbReference>
<dbReference type="PRO" id="PR:Q9H0C8"/>
<dbReference type="Proteomes" id="UP000005640">
    <property type="component" value="Chromosome 2"/>
</dbReference>
<dbReference type="RNAct" id="Q9H0C8">
    <property type="molecule type" value="protein"/>
</dbReference>
<dbReference type="Bgee" id="ENSG00000132323">
    <property type="expression patterns" value="Expressed in cerebellar hemisphere and 195 other cell types or tissues"/>
</dbReference>
<dbReference type="ExpressionAtlas" id="Q9H0C8">
    <property type="expression patterns" value="baseline and differential"/>
</dbReference>
<dbReference type="GO" id="GO:0005737">
    <property type="term" value="C:cytoplasm"/>
    <property type="evidence" value="ECO:0007669"/>
    <property type="project" value="UniProtKB-SubCell"/>
</dbReference>
<dbReference type="GO" id="GO:0046872">
    <property type="term" value="F:metal ion binding"/>
    <property type="evidence" value="ECO:0007669"/>
    <property type="project" value="UniProtKB-KW"/>
</dbReference>
<dbReference type="GO" id="GO:0004722">
    <property type="term" value="F:protein serine/threonine phosphatase activity"/>
    <property type="evidence" value="ECO:0007669"/>
    <property type="project" value="UniProtKB-EC"/>
</dbReference>
<dbReference type="GO" id="GO:0007165">
    <property type="term" value="P:signal transduction"/>
    <property type="evidence" value="ECO:0000318"/>
    <property type="project" value="GO_Central"/>
</dbReference>
<dbReference type="CDD" id="cd00143">
    <property type="entry name" value="PP2Cc"/>
    <property type="match status" value="1"/>
</dbReference>
<dbReference type="FunFam" id="3.60.40.10:FF:000018">
    <property type="entry name" value="Integrin-linked kinase-associated serine/threonine phosphatase 2C"/>
    <property type="match status" value="1"/>
</dbReference>
<dbReference type="Gene3D" id="3.60.40.10">
    <property type="entry name" value="PPM-type phosphatase domain"/>
    <property type="match status" value="1"/>
</dbReference>
<dbReference type="InterPro" id="IPR015655">
    <property type="entry name" value="PP2C"/>
</dbReference>
<dbReference type="InterPro" id="IPR000222">
    <property type="entry name" value="PP2C_BS"/>
</dbReference>
<dbReference type="InterPro" id="IPR036457">
    <property type="entry name" value="PPM-type-like_dom_sf"/>
</dbReference>
<dbReference type="InterPro" id="IPR001932">
    <property type="entry name" value="PPM-type_phosphatase-like_dom"/>
</dbReference>
<dbReference type="PANTHER" id="PTHR47992">
    <property type="entry name" value="PROTEIN PHOSPHATASE"/>
    <property type="match status" value="1"/>
</dbReference>
<dbReference type="Pfam" id="PF00481">
    <property type="entry name" value="PP2C"/>
    <property type="match status" value="1"/>
</dbReference>
<dbReference type="SMART" id="SM00332">
    <property type="entry name" value="PP2Cc"/>
    <property type="match status" value="1"/>
</dbReference>
<dbReference type="SUPFAM" id="SSF81606">
    <property type="entry name" value="PP2C-like"/>
    <property type="match status" value="1"/>
</dbReference>
<dbReference type="PROSITE" id="PS01032">
    <property type="entry name" value="PPM_1"/>
    <property type="match status" value="1"/>
</dbReference>
<dbReference type="PROSITE" id="PS51746">
    <property type="entry name" value="PPM_2"/>
    <property type="match status" value="1"/>
</dbReference>
<name>ILKAP_HUMAN</name>
<accession>Q9H0C8</accession>
<accession>B3KM39</accession>
<keyword id="KW-0007">Acetylation</keyword>
<keyword id="KW-0963">Cytoplasm</keyword>
<keyword id="KW-0378">Hydrolase</keyword>
<keyword id="KW-0460">Magnesium</keyword>
<keyword id="KW-0464">Manganese</keyword>
<keyword id="KW-0479">Metal-binding</keyword>
<keyword id="KW-0597">Phosphoprotein</keyword>
<keyword id="KW-0904">Protein phosphatase</keyword>
<keyword id="KW-1267">Proteomics identification</keyword>
<keyword id="KW-1185">Reference proteome</keyword>
<protein>
    <recommendedName>
        <fullName>Integrin-linked kinase-associated serine/threonine phosphatase 2C</fullName>
        <shortName>ILKAP</shortName>
        <ecNumber>3.1.3.16</ecNumber>
    </recommendedName>
</protein>